<sequence>DLTEAANKSNEALRLAKQESNDYRRQVQALTCEVDALKGTNESLERQMREMEENFAMESSSSQDKIVQLEEDTQNMKDEMAKHLHEYQDLLNVKMALDIEIATYRKLLEGEESRISTPLPNFSSFNLRETMLELKPNIESTFTKKVLIKTIETRDGQVLNESTQNHDDLE</sequence>
<evidence type="ECO:0000250" key="1"/>
<evidence type="ECO:0000255" key="2">
    <source>
        <dbReference type="PROSITE-ProRule" id="PRU01188"/>
    </source>
</evidence>
<evidence type="ECO:0000256" key="3">
    <source>
        <dbReference type="SAM" id="MobiDB-lite"/>
    </source>
</evidence>
<feature type="chain" id="PRO_0000063764" description="Vimentin A1">
    <location>
        <begin position="1" status="less than"/>
        <end position="170"/>
    </location>
</feature>
<feature type="domain" description="IF rod" evidence="2">
    <location>
        <begin position="1" status="less than"/>
        <end position="115"/>
    </location>
</feature>
<feature type="region of interest" description="Coil 2">
    <location>
        <begin position="1" status="less than"/>
        <end position="111"/>
    </location>
</feature>
<feature type="region of interest" description="Disordered" evidence="3">
    <location>
        <begin position="1"/>
        <end position="20"/>
    </location>
</feature>
<feature type="region of interest" description="Tail">
    <location>
        <begin position="112"/>
        <end position="170"/>
    </location>
</feature>
<feature type="compositionally biased region" description="Polar residues" evidence="3">
    <location>
        <begin position="1"/>
        <end position="10"/>
    </location>
</feature>
<feature type="non-terminal residue">
    <location>
        <position position="1"/>
    </location>
</feature>
<comment type="function">
    <text>Vimentins are class-III intermediate filaments found in various non-epithelial cells, especially mesenchymal cells. Vimentin is attached to the nucleus, endoplasmic reticulum, and mitochondria, either laterally or terminally.</text>
</comment>
<comment type="subunit">
    <text evidence="1">Homomer.</text>
</comment>
<comment type="tissue specificity">
    <text>Expressed in low amounts in retina, optic nerve, and brain and in higher amounts in spinal cord.</text>
</comment>
<comment type="PTM">
    <text evidence="1">One of the most prominent phosphoproteins in various cells of mesenchymal origin. Phosphorylation is enhanced during cell division, at which time vimentin filaments are significantly reorganized (By similarity).</text>
</comment>
<comment type="similarity">
    <text evidence="2">Belongs to the intermediate filament family.</text>
</comment>
<name>VIM1_CARAU</name>
<keyword id="KW-0175">Coiled coil</keyword>
<keyword id="KW-0403">Intermediate filament</keyword>
<keyword id="KW-1185">Reference proteome</keyword>
<organism>
    <name type="scientific">Carassius auratus</name>
    <name type="common">Goldfish</name>
    <dbReference type="NCBI Taxonomy" id="7957"/>
    <lineage>
        <taxon>Eukaryota</taxon>
        <taxon>Metazoa</taxon>
        <taxon>Chordata</taxon>
        <taxon>Craniata</taxon>
        <taxon>Vertebrata</taxon>
        <taxon>Euteleostomi</taxon>
        <taxon>Actinopterygii</taxon>
        <taxon>Neopterygii</taxon>
        <taxon>Teleostei</taxon>
        <taxon>Ostariophysi</taxon>
        <taxon>Cypriniformes</taxon>
        <taxon>Cyprinidae</taxon>
        <taxon>Cyprininae</taxon>
        <taxon>Carassius</taxon>
    </lineage>
</organism>
<accession>P48671</accession>
<reference key="1">
    <citation type="journal article" date="1994" name="J. Neurochem.">
        <title>Cloning of multiple forms of goldfish vimentin: differential expression in CNS.</title>
        <authorList>
            <person name="Glasgow E."/>
            <person name="Druger R.K."/>
            <person name="Fuchs C."/>
            <person name="Levine E.M."/>
            <person name="Giordano S."/>
            <person name="Schechter N."/>
        </authorList>
    </citation>
    <scope>NUCLEOTIDE SEQUENCE [MRNA]</scope>
    <source>
        <tissue>Retina</tissue>
    </source>
</reference>
<proteinExistence type="evidence at transcript level"/>
<protein>
    <recommendedName>
        <fullName>Vimentin A1</fullName>
    </recommendedName>
</protein>
<dbReference type="EMBL" id="L23840">
    <property type="protein sequence ID" value="AAA21755.1"/>
    <property type="molecule type" value="mRNA"/>
</dbReference>
<dbReference type="PIR" id="I50482">
    <property type="entry name" value="I50482"/>
</dbReference>
<dbReference type="SMR" id="P48671"/>
<dbReference type="Proteomes" id="UP000515129">
    <property type="component" value="Unplaced"/>
</dbReference>
<dbReference type="GO" id="GO:0030424">
    <property type="term" value="C:axon"/>
    <property type="evidence" value="ECO:0007669"/>
    <property type="project" value="TreeGrafter"/>
</dbReference>
<dbReference type="GO" id="GO:0005737">
    <property type="term" value="C:cytoplasm"/>
    <property type="evidence" value="ECO:0007669"/>
    <property type="project" value="TreeGrafter"/>
</dbReference>
<dbReference type="GO" id="GO:0005882">
    <property type="term" value="C:intermediate filament"/>
    <property type="evidence" value="ECO:0007669"/>
    <property type="project" value="UniProtKB-KW"/>
</dbReference>
<dbReference type="GO" id="GO:0005886">
    <property type="term" value="C:plasma membrane"/>
    <property type="evidence" value="ECO:0007669"/>
    <property type="project" value="TreeGrafter"/>
</dbReference>
<dbReference type="GO" id="GO:0005200">
    <property type="term" value="F:structural constituent of cytoskeleton"/>
    <property type="evidence" value="ECO:0007669"/>
    <property type="project" value="TreeGrafter"/>
</dbReference>
<dbReference type="GO" id="GO:0045109">
    <property type="term" value="P:intermediate filament organization"/>
    <property type="evidence" value="ECO:0007669"/>
    <property type="project" value="TreeGrafter"/>
</dbReference>
<dbReference type="FunFam" id="1.20.5.170:FF:000002">
    <property type="entry name" value="Type I keratin KA11"/>
    <property type="match status" value="1"/>
</dbReference>
<dbReference type="Gene3D" id="1.20.5.170">
    <property type="match status" value="1"/>
</dbReference>
<dbReference type="Gene3D" id="1.20.5.500">
    <property type="entry name" value="Single helix bin"/>
    <property type="match status" value="1"/>
</dbReference>
<dbReference type="InterPro" id="IPR018039">
    <property type="entry name" value="IF_conserved"/>
</dbReference>
<dbReference type="InterPro" id="IPR039008">
    <property type="entry name" value="IF_rod_dom"/>
</dbReference>
<dbReference type="InterPro" id="IPR050405">
    <property type="entry name" value="Intermediate_filament"/>
</dbReference>
<dbReference type="PANTHER" id="PTHR45652">
    <property type="entry name" value="GLIAL FIBRILLARY ACIDIC PROTEIN"/>
    <property type="match status" value="1"/>
</dbReference>
<dbReference type="PANTHER" id="PTHR45652:SF5">
    <property type="entry name" value="VIMENTIN"/>
    <property type="match status" value="1"/>
</dbReference>
<dbReference type="Pfam" id="PF00038">
    <property type="entry name" value="Filament"/>
    <property type="match status" value="1"/>
</dbReference>
<dbReference type="SUPFAM" id="SSF64593">
    <property type="entry name" value="Intermediate filament protein, coiled coil region"/>
    <property type="match status" value="1"/>
</dbReference>
<dbReference type="PROSITE" id="PS00226">
    <property type="entry name" value="IF_ROD_1"/>
    <property type="match status" value="1"/>
</dbReference>
<dbReference type="PROSITE" id="PS51842">
    <property type="entry name" value="IF_ROD_2"/>
    <property type="match status" value="1"/>
</dbReference>